<sequence length="126" mass="14573">MRTNLRMAEKGADCLLRLIVYQMFEPARMLLYIFKAKNIAEKPFGESVKSYDFLSPLSPILCKNKLSVLYAHKPLPFKLLNHPPHRRNSYLLPCPPLQPSTFLSEYSPLFLKSITPPLTLRRLQSL</sequence>
<keyword id="KW-1185">Reference proteome</keyword>
<organism>
    <name type="scientific">Archaeoglobus fulgidus (strain ATCC 49558 / DSM 4304 / JCM 9628 / NBRC 100126 / VC-16)</name>
    <dbReference type="NCBI Taxonomy" id="224325"/>
    <lineage>
        <taxon>Archaea</taxon>
        <taxon>Methanobacteriati</taxon>
        <taxon>Methanobacteriota</taxon>
        <taxon>Archaeoglobi</taxon>
        <taxon>Archaeoglobales</taxon>
        <taxon>Archaeoglobaceae</taxon>
        <taxon>Archaeoglobus</taxon>
    </lineage>
</organism>
<feature type="chain" id="PRO_0000127888" description="Uncharacterized protein AF_0562">
    <location>
        <begin position="1"/>
        <end position="126"/>
    </location>
</feature>
<protein>
    <recommendedName>
        <fullName>Uncharacterized protein AF_0562</fullName>
    </recommendedName>
</protein>
<reference key="1">
    <citation type="journal article" date="1997" name="Nature">
        <title>The complete genome sequence of the hyperthermophilic, sulphate-reducing archaeon Archaeoglobus fulgidus.</title>
        <authorList>
            <person name="Klenk H.-P."/>
            <person name="Clayton R.A."/>
            <person name="Tomb J.-F."/>
            <person name="White O."/>
            <person name="Nelson K.E."/>
            <person name="Ketchum K.A."/>
            <person name="Dodson R.J."/>
            <person name="Gwinn M.L."/>
            <person name="Hickey E.K."/>
            <person name="Peterson J.D."/>
            <person name="Richardson D.L."/>
            <person name="Kerlavage A.R."/>
            <person name="Graham D.E."/>
            <person name="Kyrpides N.C."/>
            <person name="Fleischmann R.D."/>
            <person name="Quackenbush J."/>
            <person name="Lee N.H."/>
            <person name="Sutton G.G."/>
            <person name="Gill S.R."/>
            <person name="Kirkness E.F."/>
            <person name="Dougherty B.A."/>
            <person name="McKenney K."/>
            <person name="Adams M.D."/>
            <person name="Loftus B.J."/>
            <person name="Peterson S.N."/>
            <person name="Reich C.I."/>
            <person name="McNeil L.K."/>
            <person name="Badger J.H."/>
            <person name="Glodek A."/>
            <person name="Zhou L."/>
            <person name="Overbeek R."/>
            <person name="Gocayne J.D."/>
            <person name="Weidman J.F."/>
            <person name="McDonald L.A."/>
            <person name="Utterback T.R."/>
            <person name="Cotton M.D."/>
            <person name="Spriggs T."/>
            <person name="Artiach P."/>
            <person name="Kaine B.P."/>
            <person name="Sykes S.M."/>
            <person name="Sadow P.W."/>
            <person name="D'Andrea K.P."/>
            <person name="Bowman C."/>
            <person name="Fujii C."/>
            <person name="Garland S.A."/>
            <person name="Mason T.M."/>
            <person name="Olsen G.J."/>
            <person name="Fraser C.M."/>
            <person name="Smith H.O."/>
            <person name="Woese C.R."/>
            <person name="Venter J.C."/>
        </authorList>
    </citation>
    <scope>NUCLEOTIDE SEQUENCE [LARGE SCALE GENOMIC DNA]</scope>
    <source>
        <strain>ATCC 49558 / DSM 4304 / JCM 9628 / NBRC 100126 / VC-16</strain>
    </source>
</reference>
<gene>
    <name type="ordered locus">AF_0562</name>
</gene>
<dbReference type="EMBL" id="AE000782">
    <property type="protein sequence ID" value="AAB90679.1"/>
    <property type="molecule type" value="Genomic_DNA"/>
</dbReference>
<dbReference type="PIR" id="B69320">
    <property type="entry name" value="B69320"/>
</dbReference>
<dbReference type="STRING" id="224325.AF_0562"/>
<dbReference type="PaxDb" id="224325-AF_0562"/>
<dbReference type="EnsemblBacteria" id="AAB90679">
    <property type="protein sequence ID" value="AAB90679"/>
    <property type="gene ID" value="AF_0562"/>
</dbReference>
<dbReference type="KEGG" id="afu:AF_0562"/>
<dbReference type="HOGENOM" id="CLU_1976402_0_0_2"/>
<dbReference type="Proteomes" id="UP000002199">
    <property type="component" value="Chromosome"/>
</dbReference>
<name>Y562_ARCFU</name>
<proteinExistence type="predicted"/>
<accession>O29691</accession>